<accession>P38756</accession>
<accession>D3DKU6</accession>
<proteinExistence type="evidence at protein level"/>
<comment type="function">
    <text evidence="3">Catalyzes the ATP-dependent dehydration of threonylcarbamoyladenosine at position 37 (t(6)A37) to form cyclic t(6)A37 (ct(6)A37) in tRNAs that read codons beginning with adenine.</text>
</comment>
<comment type="interaction">
    <interactant intactId="EBI-24431">
        <id>P38756</id>
    </interactant>
    <interactant intactId="EBI-26618">
        <id>P36101</id>
        <label>TCD2</label>
    </interactant>
    <organismsDiffer>false</organismsDiffer>
    <experiments>3</experiments>
</comment>
<comment type="subcellular location">
    <subcellularLocation>
        <location evidence="4">Mitochondrion outer membrane</location>
        <topology evidence="4">Multi-pass membrane protein</topology>
    </subcellularLocation>
</comment>
<comment type="disruption phenotype">
    <text evidence="3">Displays only the t(6)A but not the ct(6)A modification in tRNAs. Unable to sustain respiratory growth under non-fermenting conditions.</text>
</comment>
<comment type="miscellaneous">
    <text evidence="2">Present with 8430 molecules/cell in log phase SD medium.</text>
</comment>
<comment type="miscellaneous">
    <text evidence="5">ct(6)A is involved in promoting decoding efficiency. It is an unstable modification that can be easily hydrolyzed and converted to t(6)A during nucleoside preparation by conventional methods (PubMed:23242255).</text>
</comment>
<comment type="similarity">
    <text evidence="4">Belongs to the HesA/MoeB/ThiF family.</text>
</comment>
<reference key="1">
    <citation type="journal article" date="1994" name="Science">
        <title>Complete nucleotide sequence of Saccharomyces cerevisiae chromosome VIII.</title>
        <authorList>
            <person name="Johnston M."/>
            <person name="Andrews S."/>
            <person name="Brinkman R."/>
            <person name="Cooper J."/>
            <person name="Ding H."/>
            <person name="Dover J."/>
            <person name="Du Z."/>
            <person name="Favello A."/>
            <person name="Fulton L."/>
            <person name="Gattung S."/>
            <person name="Geisel C."/>
            <person name="Kirsten J."/>
            <person name="Kucaba T."/>
            <person name="Hillier L.W."/>
            <person name="Jier M."/>
            <person name="Johnston L."/>
            <person name="Langston Y."/>
            <person name="Latreille P."/>
            <person name="Louis E.J."/>
            <person name="Macri C."/>
            <person name="Mardis E."/>
            <person name="Menezes S."/>
            <person name="Mouser L."/>
            <person name="Nhan M."/>
            <person name="Rifkin L."/>
            <person name="Riles L."/>
            <person name="St Peter H."/>
            <person name="Trevaskis E."/>
            <person name="Vaughan K."/>
            <person name="Vignati D."/>
            <person name="Wilcox L."/>
            <person name="Wohldman P."/>
            <person name="Waterston R."/>
            <person name="Wilson R."/>
            <person name="Vaudin M."/>
        </authorList>
    </citation>
    <scope>NUCLEOTIDE SEQUENCE [LARGE SCALE GENOMIC DNA]</scope>
    <source>
        <strain>ATCC 204508 / S288c</strain>
    </source>
</reference>
<reference key="2">
    <citation type="journal article" date="2014" name="G3 (Bethesda)">
        <title>The reference genome sequence of Saccharomyces cerevisiae: Then and now.</title>
        <authorList>
            <person name="Engel S.R."/>
            <person name="Dietrich F.S."/>
            <person name="Fisk D.G."/>
            <person name="Binkley G."/>
            <person name="Balakrishnan R."/>
            <person name="Costanzo M.C."/>
            <person name="Dwight S.S."/>
            <person name="Hitz B.C."/>
            <person name="Karra K."/>
            <person name="Nash R.S."/>
            <person name="Weng S."/>
            <person name="Wong E.D."/>
            <person name="Lloyd P."/>
            <person name="Skrzypek M.S."/>
            <person name="Miyasato S.R."/>
            <person name="Simison M."/>
            <person name="Cherry J.M."/>
        </authorList>
    </citation>
    <scope>GENOME REANNOTATION</scope>
    <source>
        <strain>ATCC 204508 / S288c</strain>
    </source>
</reference>
<reference key="3">
    <citation type="journal article" date="2003" name="Nature">
        <title>Global analysis of protein expression in yeast.</title>
        <authorList>
            <person name="Ghaemmaghami S."/>
            <person name="Huh W.-K."/>
            <person name="Bower K."/>
            <person name="Howson R.W."/>
            <person name="Belle A."/>
            <person name="Dephoure N."/>
            <person name="O'Shea E.K."/>
            <person name="Weissman J.S."/>
        </authorList>
    </citation>
    <scope>LEVEL OF PROTEIN EXPRESSION [LARGE SCALE ANALYSIS]</scope>
</reference>
<reference key="4">
    <citation type="journal article" date="2003" name="Proc. Natl. Acad. Sci. U.S.A.">
        <title>The proteome of Saccharomyces cerevisiae mitochondria.</title>
        <authorList>
            <person name="Sickmann A."/>
            <person name="Reinders J."/>
            <person name="Wagner Y."/>
            <person name="Joppich C."/>
            <person name="Zahedi R.P."/>
            <person name="Meyer H.E."/>
            <person name="Schoenfisch B."/>
            <person name="Perschil I."/>
            <person name="Chacinska A."/>
            <person name="Guiard B."/>
            <person name="Rehling P."/>
            <person name="Pfanner N."/>
            <person name="Meisinger C."/>
        </authorList>
    </citation>
    <scope>SUBCELLULAR LOCATION [LARGE SCALE ANALYSIS]</scope>
    <source>
        <strain>ATCC 76625 / YPH499</strain>
    </source>
</reference>
<reference key="5">
    <citation type="journal article" date="2006" name="Mol. Biol. Cell">
        <title>Proteomic analysis of the yeast mitochondrial outer membrane reveals accumulation of a subclass of preproteins.</title>
        <authorList>
            <person name="Zahedi R.P."/>
            <person name="Sickmann A."/>
            <person name="Boehm A.M."/>
            <person name="Winkler C."/>
            <person name="Zufall N."/>
            <person name="Schoenfisch B."/>
            <person name="Guiard B."/>
            <person name="Pfanner N."/>
            <person name="Meisinger C."/>
        </authorList>
    </citation>
    <scope>SUBCELLULAR LOCATION</scope>
    <scope>IDENTIFICATION BY MASS SPECTROMETRY</scope>
</reference>
<reference key="6">
    <citation type="journal article" date="2007" name="J. Proteome Res.">
        <title>Large-scale phosphorylation analysis of alpha-factor-arrested Saccharomyces cerevisiae.</title>
        <authorList>
            <person name="Li X."/>
            <person name="Gerber S.A."/>
            <person name="Rudner A.D."/>
            <person name="Beausoleil S.A."/>
            <person name="Haas W."/>
            <person name="Villen J."/>
            <person name="Elias J.E."/>
            <person name="Gygi S.P."/>
        </authorList>
    </citation>
    <scope>PHOSPHORYLATION [LARGE SCALE ANALYSIS] AT SER-259</scope>
    <scope>IDENTIFICATION BY MASS SPECTROMETRY [LARGE SCALE ANALYSIS]</scope>
    <source>
        <strain>ADR376</strain>
    </source>
</reference>
<reference key="7">
    <citation type="journal article" date="2013" name="Nat. Chem. Biol.">
        <title>A cyclic form of N6-threonylcarbamoyladenosine as a widely distributed tRNA hypermodification.</title>
        <authorList>
            <person name="Miyauchi K."/>
            <person name="Kimura S."/>
            <person name="Suzuki T."/>
        </authorList>
    </citation>
    <scope>FUNCTION</scope>
    <scope>DISRUPTION PHENOTYPE</scope>
</reference>
<evidence type="ECO:0000255" key="1"/>
<evidence type="ECO:0000269" key="2">
    <source>
    </source>
</evidence>
<evidence type="ECO:0000269" key="3">
    <source>
    </source>
</evidence>
<evidence type="ECO:0000305" key="4"/>
<evidence type="ECO:0000305" key="5">
    <source>
    </source>
</evidence>
<evidence type="ECO:0007744" key="6">
    <source>
    </source>
</evidence>
<gene>
    <name type="primary">TCD1</name>
    <name type="ordered locus">YHR003C</name>
</gene>
<protein>
    <recommendedName>
        <fullName>tRNA threonylcarbamoyladenosine dehydratase 1</fullName>
        <ecNumber>6.1.-.-</ecNumber>
    </recommendedName>
    <alternativeName>
        <fullName>t(6)A37 dehydratase 1</fullName>
    </alternativeName>
</protein>
<dbReference type="EC" id="6.1.-.-"/>
<dbReference type="EMBL" id="U10555">
    <property type="protein sequence ID" value="AAB68430.1"/>
    <property type="molecule type" value="Genomic_DNA"/>
</dbReference>
<dbReference type="EMBL" id="BK006934">
    <property type="protein sequence ID" value="DAA06690.1"/>
    <property type="molecule type" value="Genomic_DNA"/>
</dbReference>
<dbReference type="PIR" id="S46801">
    <property type="entry name" value="S46801"/>
</dbReference>
<dbReference type="RefSeq" id="NP_011866.1">
    <property type="nucleotide sequence ID" value="NM_001179133.1"/>
</dbReference>
<dbReference type="SMR" id="P38756"/>
<dbReference type="BioGRID" id="36428">
    <property type="interactions" value="116"/>
</dbReference>
<dbReference type="DIP" id="DIP-4417N"/>
<dbReference type="FunCoup" id="P38756">
    <property type="interactions" value="169"/>
</dbReference>
<dbReference type="IntAct" id="P38756">
    <property type="interactions" value="25"/>
</dbReference>
<dbReference type="MINT" id="P38756"/>
<dbReference type="STRING" id="4932.YHR003C"/>
<dbReference type="iPTMnet" id="P38756"/>
<dbReference type="PaxDb" id="4932-YHR003C"/>
<dbReference type="PeptideAtlas" id="P38756"/>
<dbReference type="EnsemblFungi" id="YHR003C_mRNA">
    <property type="protein sequence ID" value="YHR003C"/>
    <property type="gene ID" value="YHR003C"/>
</dbReference>
<dbReference type="GeneID" id="856392"/>
<dbReference type="KEGG" id="sce:YHR003C"/>
<dbReference type="AGR" id="SGD:S000001045"/>
<dbReference type="SGD" id="S000001045">
    <property type="gene designation" value="TCD1"/>
</dbReference>
<dbReference type="VEuPathDB" id="FungiDB:YHR003C"/>
<dbReference type="eggNOG" id="KOG2018">
    <property type="taxonomic scope" value="Eukaryota"/>
</dbReference>
<dbReference type="GeneTree" id="ENSGT00940000176473"/>
<dbReference type="HOGENOM" id="CLU_013325_9_3_1"/>
<dbReference type="InParanoid" id="P38756"/>
<dbReference type="OMA" id="ALVMTRW"/>
<dbReference type="OrthoDB" id="10265862at2759"/>
<dbReference type="BioCyc" id="YEAST:G3O-31068-MONOMER"/>
<dbReference type="BioGRID-ORCS" id="856392">
    <property type="hits" value="0 hits in 10 CRISPR screens"/>
</dbReference>
<dbReference type="PRO" id="PR:P38756"/>
<dbReference type="Proteomes" id="UP000002311">
    <property type="component" value="Chromosome VIII"/>
</dbReference>
<dbReference type="RNAct" id="P38756">
    <property type="molecule type" value="protein"/>
</dbReference>
<dbReference type="GO" id="GO:0005741">
    <property type="term" value="C:mitochondrial outer membrane"/>
    <property type="evidence" value="ECO:0007005"/>
    <property type="project" value="SGD"/>
</dbReference>
<dbReference type="GO" id="GO:0005739">
    <property type="term" value="C:mitochondrion"/>
    <property type="evidence" value="ECO:0007005"/>
    <property type="project" value="SGD"/>
</dbReference>
<dbReference type="GO" id="GO:0005524">
    <property type="term" value="F:ATP binding"/>
    <property type="evidence" value="ECO:0007669"/>
    <property type="project" value="UniProtKB-KW"/>
</dbReference>
<dbReference type="GO" id="GO:0061503">
    <property type="term" value="F:tRNA threonylcarbamoyladenosine dehydratase"/>
    <property type="evidence" value="ECO:0000315"/>
    <property type="project" value="SGD"/>
</dbReference>
<dbReference type="GO" id="GO:0008641">
    <property type="term" value="F:ubiquitin-like modifier activating enzyme activity"/>
    <property type="evidence" value="ECO:0007669"/>
    <property type="project" value="InterPro"/>
</dbReference>
<dbReference type="GO" id="GO:0061504">
    <property type="term" value="P:cyclic threonylcarbamoyladenosine biosynthetic process"/>
    <property type="evidence" value="ECO:0000315"/>
    <property type="project" value="SGD"/>
</dbReference>
<dbReference type="CDD" id="cd00755">
    <property type="entry name" value="YgdL_like"/>
    <property type="match status" value="1"/>
</dbReference>
<dbReference type="Gene3D" id="3.40.50.720">
    <property type="entry name" value="NAD(P)-binding Rossmann-like Domain"/>
    <property type="match status" value="1"/>
</dbReference>
<dbReference type="InterPro" id="IPR045886">
    <property type="entry name" value="ThiF/MoeB/HesA"/>
</dbReference>
<dbReference type="InterPro" id="IPR000594">
    <property type="entry name" value="ThiF_NAD_FAD-bd"/>
</dbReference>
<dbReference type="InterPro" id="IPR035985">
    <property type="entry name" value="Ubiquitin-activating_enz"/>
</dbReference>
<dbReference type="PANTHER" id="PTHR43267">
    <property type="entry name" value="TRNA THREONYLCARBAMOYLADENOSINE DEHYDRATASE"/>
    <property type="match status" value="1"/>
</dbReference>
<dbReference type="PANTHER" id="PTHR43267:SF2">
    <property type="entry name" value="TRNA THREONYLCARBAMOYLADENOSINE DEHYDRATASE 1-RELATED"/>
    <property type="match status" value="1"/>
</dbReference>
<dbReference type="Pfam" id="PF00899">
    <property type="entry name" value="ThiF"/>
    <property type="match status" value="1"/>
</dbReference>
<dbReference type="SUPFAM" id="SSF69572">
    <property type="entry name" value="Activating enzymes of the ubiquitin-like proteins"/>
    <property type="match status" value="1"/>
</dbReference>
<sequence length="429" mass="48883">MANNTWKLIATTALISVFSTQLAKSVWKEYKLSCAANKNKTVSRPRQYDDHLFREQLARNYAFLGEEGMRKIKEQYIVIVGAGEVGSWVCTMLIRSGCQKIMIIDPENISIDSLNTHCCAVLSDIGKPKVQCLKEHLSKIAPWSEIKARAKAWTKENSHDLIFADGESPTFIVDCLDNLESKVDLLEYAHHNKIDVISSMGVATKSDPTRVSINDISMTEFDPISRCVRRKLRKRGIATGISVVFSNEMLDPRRDDILSPIDCEHRAINAVRDEALRHLPELGTMPGIFGLSIATWILTKVSGYPMKENEVKNRLKFYDSILETFQKQMARLNENKERSSLLGLEEVGYIVEEMFRGKSPISGYSTKLALTKWEANKEISLTNVVLMTKEEQEIHEKRILLDGEKLTAVYSEEVLDFIERLFKEEEYYS</sequence>
<organism>
    <name type="scientific">Saccharomyces cerevisiae (strain ATCC 204508 / S288c)</name>
    <name type="common">Baker's yeast</name>
    <dbReference type="NCBI Taxonomy" id="559292"/>
    <lineage>
        <taxon>Eukaryota</taxon>
        <taxon>Fungi</taxon>
        <taxon>Dikarya</taxon>
        <taxon>Ascomycota</taxon>
        <taxon>Saccharomycotina</taxon>
        <taxon>Saccharomycetes</taxon>
        <taxon>Saccharomycetales</taxon>
        <taxon>Saccharomycetaceae</taxon>
        <taxon>Saccharomyces</taxon>
    </lineage>
</organism>
<name>TCD1_YEAST</name>
<feature type="chain" id="PRO_0000120585" description="tRNA threonylcarbamoyladenosine dehydratase 1">
    <location>
        <begin position="1"/>
        <end position="429"/>
    </location>
</feature>
<feature type="transmembrane region" description="Helical" evidence="1">
    <location>
        <begin position="3"/>
        <end position="23"/>
    </location>
</feature>
<feature type="transmembrane region" description="Helical" evidence="1">
    <location>
        <begin position="74"/>
        <end position="94"/>
    </location>
</feature>
<feature type="transmembrane region" description="Helical" evidence="1">
    <location>
        <begin position="279"/>
        <end position="299"/>
    </location>
</feature>
<feature type="modified residue" description="Phosphoserine" evidence="6">
    <location>
        <position position="259"/>
    </location>
</feature>
<keyword id="KW-0067">ATP-binding</keyword>
<keyword id="KW-0436">Ligase</keyword>
<keyword id="KW-0472">Membrane</keyword>
<keyword id="KW-0496">Mitochondrion</keyword>
<keyword id="KW-1000">Mitochondrion outer membrane</keyword>
<keyword id="KW-0547">Nucleotide-binding</keyword>
<keyword id="KW-0597">Phosphoprotein</keyword>
<keyword id="KW-1185">Reference proteome</keyword>
<keyword id="KW-0812">Transmembrane</keyword>
<keyword id="KW-1133">Transmembrane helix</keyword>